<evidence type="ECO:0000255" key="1">
    <source>
        <dbReference type="HAMAP-Rule" id="MF_00072"/>
    </source>
</evidence>
<reference key="1">
    <citation type="journal article" date="2004" name="PLoS Biol.">
        <title>Genomic insights into methanotrophy: the complete genome sequence of Methylococcus capsulatus (Bath).</title>
        <authorList>
            <person name="Ward N.L."/>
            <person name="Larsen O."/>
            <person name="Sakwa J."/>
            <person name="Bruseth L."/>
            <person name="Khouri H.M."/>
            <person name="Durkin A.S."/>
            <person name="Dimitrov G."/>
            <person name="Jiang L."/>
            <person name="Scanlan D."/>
            <person name="Kang K.H."/>
            <person name="Lewis M.R."/>
            <person name="Nelson K.E."/>
            <person name="Methe B.A."/>
            <person name="Wu M."/>
            <person name="Heidelberg J.F."/>
            <person name="Paulsen I.T."/>
            <person name="Fouts D.E."/>
            <person name="Ravel J."/>
            <person name="Tettelin H."/>
            <person name="Ren Q."/>
            <person name="Read T.D."/>
            <person name="DeBoy R.T."/>
            <person name="Seshadri R."/>
            <person name="Salzberg S.L."/>
            <person name="Jensen H.B."/>
            <person name="Birkeland N.K."/>
            <person name="Nelson W.C."/>
            <person name="Dodson R.J."/>
            <person name="Grindhaug S.H."/>
            <person name="Holt I.E."/>
            <person name="Eidhammer I."/>
            <person name="Jonasen I."/>
            <person name="Vanaken S."/>
            <person name="Utterback T.R."/>
            <person name="Feldblyum T.V."/>
            <person name="Fraser C.M."/>
            <person name="Lillehaug J.R."/>
            <person name="Eisen J.A."/>
        </authorList>
    </citation>
    <scope>NUCLEOTIDE SEQUENCE [LARGE SCALE GENOMIC DNA]</scope>
    <source>
        <strain>ATCC 33009 / NCIMB 11132 / Bath</strain>
    </source>
</reference>
<keyword id="KW-0963">Cytoplasm</keyword>
<keyword id="KW-0342">GTP-binding</keyword>
<keyword id="KW-0547">Nucleotide-binding</keyword>
<keyword id="KW-0648">Protein biosynthesis</keyword>
<keyword id="KW-1185">Reference proteome</keyword>
<feature type="chain" id="PRO_0000242191" description="Peptide chain release factor 3">
    <location>
        <begin position="1"/>
        <end position="526"/>
    </location>
</feature>
<feature type="domain" description="tr-type G">
    <location>
        <begin position="9"/>
        <end position="277"/>
    </location>
</feature>
<feature type="binding site" evidence="1">
    <location>
        <begin position="18"/>
        <end position="25"/>
    </location>
    <ligand>
        <name>GTP</name>
        <dbReference type="ChEBI" id="CHEBI:37565"/>
    </ligand>
</feature>
<feature type="binding site" evidence="1">
    <location>
        <begin position="86"/>
        <end position="90"/>
    </location>
    <ligand>
        <name>GTP</name>
        <dbReference type="ChEBI" id="CHEBI:37565"/>
    </ligand>
</feature>
<feature type="binding site" evidence="1">
    <location>
        <begin position="140"/>
        <end position="143"/>
    </location>
    <ligand>
        <name>GTP</name>
        <dbReference type="ChEBI" id="CHEBI:37565"/>
    </ligand>
</feature>
<protein>
    <recommendedName>
        <fullName evidence="1">Peptide chain release factor 3</fullName>
        <shortName evidence="1">RF-3</shortName>
    </recommendedName>
</protein>
<organism>
    <name type="scientific">Methylococcus capsulatus (strain ATCC 33009 / NCIMB 11132 / Bath)</name>
    <dbReference type="NCBI Taxonomy" id="243233"/>
    <lineage>
        <taxon>Bacteria</taxon>
        <taxon>Pseudomonadati</taxon>
        <taxon>Pseudomonadota</taxon>
        <taxon>Gammaproteobacteria</taxon>
        <taxon>Methylococcales</taxon>
        <taxon>Methylococcaceae</taxon>
        <taxon>Methylococcus</taxon>
    </lineage>
</organism>
<dbReference type="EMBL" id="AE017282">
    <property type="protein sequence ID" value="AAU91806.1"/>
    <property type="molecule type" value="Genomic_DNA"/>
</dbReference>
<dbReference type="RefSeq" id="WP_010961235.1">
    <property type="nucleotide sequence ID" value="NC_002977.6"/>
</dbReference>
<dbReference type="SMR" id="Q606M6"/>
<dbReference type="STRING" id="243233.MCA1990"/>
<dbReference type="GeneID" id="88224219"/>
<dbReference type="KEGG" id="mca:MCA1990"/>
<dbReference type="eggNOG" id="COG4108">
    <property type="taxonomic scope" value="Bacteria"/>
</dbReference>
<dbReference type="HOGENOM" id="CLU_002794_2_1_6"/>
<dbReference type="Proteomes" id="UP000006821">
    <property type="component" value="Chromosome"/>
</dbReference>
<dbReference type="GO" id="GO:0005829">
    <property type="term" value="C:cytosol"/>
    <property type="evidence" value="ECO:0007669"/>
    <property type="project" value="TreeGrafter"/>
</dbReference>
<dbReference type="GO" id="GO:0005525">
    <property type="term" value="F:GTP binding"/>
    <property type="evidence" value="ECO:0007669"/>
    <property type="project" value="UniProtKB-UniRule"/>
</dbReference>
<dbReference type="GO" id="GO:0003924">
    <property type="term" value="F:GTPase activity"/>
    <property type="evidence" value="ECO:0007669"/>
    <property type="project" value="InterPro"/>
</dbReference>
<dbReference type="GO" id="GO:0097216">
    <property type="term" value="F:guanosine tetraphosphate binding"/>
    <property type="evidence" value="ECO:0007669"/>
    <property type="project" value="UniProtKB-ARBA"/>
</dbReference>
<dbReference type="GO" id="GO:0016150">
    <property type="term" value="F:translation release factor activity, codon nonspecific"/>
    <property type="evidence" value="ECO:0007669"/>
    <property type="project" value="TreeGrafter"/>
</dbReference>
<dbReference type="GO" id="GO:0016149">
    <property type="term" value="F:translation release factor activity, codon specific"/>
    <property type="evidence" value="ECO:0007669"/>
    <property type="project" value="UniProtKB-UniRule"/>
</dbReference>
<dbReference type="GO" id="GO:0006449">
    <property type="term" value="P:regulation of translational termination"/>
    <property type="evidence" value="ECO:0007669"/>
    <property type="project" value="UniProtKB-UniRule"/>
</dbReference>
<dbReference type="CDD" id="cd04169">
    <property type="entry name" value="RF3"/>
    <property type="match status" value="1"/>
</dbReference>
<dbReference type="CDD" id="cd03689">
    <property type="entry name" value="RF3_II"/>
    <property type="match status" value="1"/>
</dbReference>
<dbReference type="CDD" id="cd16259">
    <property type="entry name" value="RF3_III"/>
    <property type="match status" value="1"/>
</dbReference>
<dbReference type="FunFam" id="3.30.70.3280:FF:000001">
    <property type="entry name" value="Peptide chain release factor 3"/>
    <property type="match status" value="1"/>
</dbReference>
<dbReference type="FunFam" id="3.40.50.300:FF:000542">
    <property type="entry name" value="Peptide chain release factor 3"/>
    <property type="match status" value="1"/>
</dbReference>
<dbReference type="Gene3D" id="3.40.50.300">
    <property type="entry name" value="P-loop containing nucleotide triphosphate hydrolases"/>
    <property type="match status" value="2"/>
</dbReference>
<dbReference type="Gene3D" id="3.30.70.3280">
    <property type="entry name" value="Peptide chain release factor 3, domain III"/>
    <property type="match status" value="1"/>
</dbReference>
<dbReference type="HAMAP" id="MF_00072">
    <property type="entry name" value="Rel_fac_3"/>
    <property type="match status" value="1"/>
</dbReference>
<dbReference type="InterPro" id="IPR053905">
    <property type="entry name" value="EF-G-like_DII"/>
</dbReference>
<dbReference type="InterPro" id="IPR035647">
    <property type="entry name" value="EFG_III/V"/>
</dbReference>
<dbReference type="InterPro" id="IPR031157">
    <property type="entry name" value="G_TR_CS"/>
</dbReference>
<dbReference type="InterPro" id="IPR027417">
    <property type="entry name" value="P-loop_NTPase"/>
</dbReference>
<dbReference type="InterPro" id="IPR004548">
    <property type="entry name" value="PrfC"/>
</dbReference>
<dbReference type="InterPro" id="IPR032090">
    <property type="entry name" value="RF3_C"/>
</dbReference>
<dbReference type="InterPro" id="IPR038467">
    <property type="entry name" value="RF3_dom_3_sf"/>
</dbReference>
<dbReference type="InterPro" id="IPR041732">
    <property type="entry name" value="RF3_GTP-bd"/>
</dbReference>
<dbReference type="InterPro" id="IPR005225">
    <property type="entry name" value="Small_GTP-bd"/>
</dbReference>
<dbReference type="InterPro" id="IPR000795">
    <property type="entry name" value="T_Tr_GTP-bd_dom"/>
</dbReference>
<dbReference type="InterPro" id="IPR009000">
    <property type="entry name" value="Transl_B-barrel_sf"/>
</dbReference>
<dbReference type="NCBIfam" id="TIGR00503">
    <property type="entry name" value="prfC"/>
    <property type="match status" value="1"/>
</dbReference>
<dbReference type="NCBIfam" id="NF001964">
    <property type="entry name" value="PRK00741.1"/>
    <property type="match status" value="1"/>
</dbReference>
<dbReference type="NCBIfam" id="TIGR00231">
    <property type="entry name" value="small_GTP"/>
    <property type="match status" value="1"/>
</dbReference>
<dbReference type="PANTHER" id="PTHR43556">
    <property type="entry name" value="PEPTIDE CHAIN RELEASE FACTOR RF3"/>
    <property type="match status" value="1"/>
</dbReference>
<dbReference type="PANTHER" id="PTHR43556:SF2">
    <property type="entry name" value="PEPTIDE CHAIN RELEASE FACTOR RF3"/>
    <property type="match status" value="1"/>
</dbReference>
<dbReference type="Pfam" id="PF22042">
    <property type="entry name" value="EF-G_D2"/>
    <property type="match status" value="1"/>
</dbReference>
<dbReference type="Pfam" id="PF00009">
    <property type="entry name" value="GTP_EFTU"/>
    <property type="match status" value="1"/>
</dbReference>
<dbReference type="Pfam" id="PF16658">
    <property type="entry name" value="RF3_C"/>
    <property type="match status" value="1"/>
</dbReference>
<dbReference type="PRINTS" id="PR00315">
    <property type="entry name" value="ELONGATNFCT"/>
</dbReference>
<dbReference type="SUPFAM" id="SSF54980">
    <property type="entry name" value="EF-G C-terminal domain-like"/>
    <property type="match status" value="1"/>
</dbReference>
<dbReference type="SUPFAM" id="SSF52540">
    <property type="entry name" value="P-loop containing nucleoside triphosphate hydrolases"/>
    <property type="match status" value="1"/>
</dbReference>
<dbReference type="SUPFAM" id="SSF50447">
    <property type="entry name" value="Translation proteins"/>
    <property type="match status" value="1"/>
</dbReference>
<dbReference type="PROSITE" id="PS00301">
    <property type="entry name" value="G_TR_1"/>
    <property type="match status" value="1"/>
</dbReference>
<dbReference type="PROSITE" id="PS51722">
    <property type="entry name" value="G_TR_2"/>
    <property type="match status" value="1"/>
</dbReference>
<name>RF3_METCA</name>
<proteinExistence type="inferred from homology"/>
<sequence length="526" mass="59348">MSELEFEIERRRTFAIISHPDAGKTTLTEKLLLFGGAIQLAGSVKGRKATRHATSDWMEMEKQRGISVTTSVMQFQHRDRIFNLLDTPGHEDFSEDTYRTLTAVDSALMVIDSAKGVEERTIKLMEVCRLRDTPILTFINKLDREGREPVELLDEVERVLNIQCAPITWPIGMGKRFKGVYHLYEDAIHLFSASHGDRIVKGEVVEGLNSPKLDELLGDIADELRMEIELVRGASHEFDPDAYRAGRQTPVFFGSAINNFGILELLDAFAEYAPPPQARQARERLVAPGEDKFSGFVFKIQANMDPAHRDRIAFLRVCSGRYTKGVRLFHVRSGKAMQVANAITFQADSRENVEEAYPGDIIGLHNHGTIQVGDTFTQGENLKFEGIPSFAPELFRRVVLKDPLRSKALQRGLQQLSEEGATQLFKPLRNNDLILGAVGVLQFDVTAFRLKAEYNVDCVYEAVPVTTARWVSCSDPKKLEEFKRKVHDNLAEDGSGYLVYLATSRVNLSLTEERWPEIRFSATREL</sequence>
<accession>Q606M6</accession>
<gene>
    <name evidence="1" type="primary">prfC</name>
    <name type="ordered locus">MCA1990</name>
</gene>
<comment type="function">
    <text evidence="1">Increases the formation of ribosomal termination complexes and stimulates activities of RF-1 and RF-2. It binds guanine nucleotides and has strong preference for UGA stop codons. It may interact directly with the ribosome. The stimulation of RF-1 and RF-2 is significantly reduced by GTP and GDP, but not by GMP.</text>
</comment>
<comment type="subcellular location">
    <subcellularLocation>
        <location evidence="1">Cytoplasm</location>
    </subcellularLocation>
</comment>
<comment type="similarity">
    <text evidence="1">Belongs to the TRAFAC class translation factor GTPase superfamily. Classic translation factor GTPase family. PrfC subfamily.</text>
</comment>